<gene>
    <name evidence="1" type="primary">EIF6</name>
</gene>
<organism>
    <name type="scientific">Guillardia theta</name>
    <name type="common">Cryptophyte</name>
    <name type="synonym">Cryptomonas phi</name>
    <dbReference type="NCBI Taxonomy" id="55529"/>
    <lineage>
        <taxon>Eukaryota</taxon>
        <taxon>Cryptophyceae</taxon>
        <taxon>Pyrenomonadales</taxon>
        <taxon>Geminigeraceae</taxon>
        <taxon>Guillardia</taxon>
    </lineage>
</organism>
<accession>Q98RM8</accession>
<dbReference type="EMBL" id="AF165818">
    <property type="protein sequence ID" value="AAK39919.1"/>
    <property type="molecule type" value="Genomic_DNA"/>
</dbReference>
<dbReference type="PIR" id="H90098">
    <property type="entry name" value="H90098"/>
</dbReference>
<dbReference type="RefSeq" id="XP_001713624.1">
    <property type="nucleotide sequence ID" value="XM_001713572.1"/>
</dbReference>
<dbReference type="SMR" id="Q98RM8"/>
<dbReference type="GeneID" id="857406"/>
<dbReference type="Proteomes" id="UP000242167">
    <property type="component" value="Chromosome 1"/>
</dbReference>
<dbReference type="GO" id="GO:0005737">
    <property type="term" value="C:cytoplasm"/>
    <property type="evidence" value="ECO:0007669"/>
    <property type="project" value="UniProtKB-SubCell"/>
</dbReference>
<dbReference type="GO" id="GO:0005730">
    <property type="term" value="C:nucleolus"/>
    <property type="evidence" value="ECO:0007669"/>
    <property type="project" value="UniProtKB-SubCell"/>
</dbReference>
<dbReference type="GO" id="GO:0043023">
    <property type="term" value="F:ribosomal large subunit binding"/>
    <property type="evidence" value="ECO:0007669"/>
    <property type="project" value="UniProtKB-UniRule"/>
</dbReference>
<dbReference type="GO" id="GO:0003743">
    <property type="term" value="F:translation initiation factor activity"/>
    <property type="evidence" value="ECO:0007669"/>
    <property type="project" value="UniProtKB-UniRule"/>
</dbReference>
<dbReference type="GO" id="GO:0042256">
    <property type="term" value="P:cytosolic ribosome assembly"/>
    <property type="evidence" value="ECO:0007669"/>
    <property type="project" value="UniProtKB-UniRule"/>
</dbReference>
<dbReference type="GO" id="GO:0042273">
    <property type="term" value="P:ribosomal large subunit biogenesis"/>
    <property type="evidence" value="ECO:0007669"/>
    <property type="project" value="UniProtKB-UniRule"/>
</dbReference>
<dbReference type="Gene3D" id="3.75.10.10">
    <property type="entry name" value="L-arginine/glycine Amidinotransferase, Chain A"/>
    <property type="match status" value="1"/>
</dbReference>
<dbReference type="HAMAP" id="MF_00032">
    <property type="entry name" value="eIF_6"/>
    <property type="match status" value="1"/>
</dbReference>
<dbReference type="InterPro" id="IPR002769">
    <property type="entry name" value="eIF6"/>
</dbReference>
<dbReference type="NCBIfam" id="TIGR00323">
    <property type="entry name" value="eIF-6"/>
    <property type="match status" value="1"/>
</dbReference>
<dbReference type="PANTHER" id="PTHR10784">
    <property type="entry name" value="TRANSLATION INITIATION FACTOR 6"/>
    <property type="match status" value="1"/>
</dbReference>
<dbReference type="Pfam" id="PF01912">
    <property type="entry name" value="eIF-6"/>
    <property type="match status" value="1"/>
</dbReference>
<dbReference type="PIRSF" id="PIRSF006413">
    <property type="entry name" value="IF-6"/>
    <property type="match status" value="1"/>
</dbReference>
<dbReference type="SMART" id="SM00654">
    <property type="entry name" value="eIF6"/>
    <property type="match status" value="1"/>
</dbReference>
<dbReference type="SUPFAM" id="SSF55909">
    <property type="entry name" value="Pentein"/>
    <property type="match status" value="1"/>
</dbReference>
<feature type="chain" id="PRO_0000402103" description="Eukaryotic translation initiation factor 6">
    <location>
        <begin position="1"/>
        <end position="228"/>
    </location>
</feature>
<reference key="1">
    <citation type="journal article" date="2001" name="Nature">
        <title>The highly reduced genome of an enslaved algal nucleus.</title>
        <authorList>
            <person name="Douglas S.E."/>
            <person name="Zauner S."/>
            <person name="Fraunholz M."/>
            <person name="Beaton M."/>
            <person name="Penny S.L."/>
            <person name="Deng L.-T."/>
            <person name="Wu X."/>
            <person name="Reith M.E."/>
            <person name="Cavalier-Smith T."/>
            <person name="Maier U.-G."/>
        </authorList>
    </citation>
    <scope>NUCLEOTIDE SEQUENCE [LARGE SCALE GENOMIC DNA]</scope>
</reference>
<reference key="2">
    <citation type="journal article" date="2000" name="Proc. Natl. Acad. Sci. U.S.A.">
        <title>Chloroplast protein and centrosomal genes, a tRNA intron, and odd telomeres in an unusually compact eukaryotic genome, the cryptomonad nucleomorph.</title>
        <authorList>
            <person name="Zauner S."/>
            <person name="Fraunholz M."/>
            <person name="Wastl J."/>
            <person name="Penny S.L."/>
            <person name="Beaton M."/>
            <person name="Cavalier-Smith T."/>
            <person name="Maier U.-G."/>
            <person name="Douglas S.E."/>
        </authorList>
    </citation>
    <scope>NUCLEOTIDE SEQUENCE [LARGE SCALE GENOMIC DNA]</scope>
</reference>
<protein>
    <recommendedName>
        <fullName evidence="1">Eukaryotic translation initiation factor 6</fullName>
        <shortName evidence="1">eIF-6</shortName>
    </recommendedName>
</protein>
<proteinExistence type="inferred from homology"/>
<keyword id="KW-0963">Cytoplasm</keyword>
<keyword id="KW-0396">Initiation factor</keyword>
<keyword id="KW-0539">Nucleus</keyword>
<keyword id="KW-0648">Protein biosynthesis</keyword>
<keyword id="KW-0690">Ribosome biogenesis</keyword>
<evidence type="ECO:0000255" key="1">
    <source>
        <dbReference type="HAMAP-Rule" id="MF_03132"/>
    </source>
</evidence>
<geneLocation type="nucleomorph"/>
<name>IF6_GUITH</name>
<comment type="function">
    <text evidence="1">Binds to the 60S ribosomal subunit and prevents its association with the 40S ribosomal subunit to form the 80S initiation complex in the cytoplasm. May also be involved in ribosome biogenesis.</text>
</comment>
<comment type="subunit">
    <text evidence="1">Monomer. Associates with the 60S ribosomal subunit.</text>
</comment>
<comment type="subcellular location">
    <subcellularLocation>
        <location evidence="1">Cytoplasm</location>
    </subcellularLocation>
    <subcellularLocation>
        <location evidence="1">Nucleus</location>
        <location evidence="1">Nucleolus</location>
    </subcellularLocation>
    <text evidence="1">Shuttles between cytoplasm and nucleus/nucleolus.</text>
</comment>
<comment type="similarity">
    <text evidence="1">Belongs to the eIF-6 family.</text>
</comment>
<sequence>MTIKLNLYGKEDIGNYILLTNSYCIVPHDINSKNYNIIKSELDNKINIICTNVSESICVGNLLIGNSKGLIVPNTITFHEQNELLNFLPEKVLVKKFNENLTNLGNLLAHNELYGLSSPDLSQSSCELISDVLGVEILKLTLGEEKMIGTYCKFNINGGIVQPFLSIEDHDELVEITGVPFIGGTVNSGCSNVGKGIVCNDNLVFCGYKTNQTEMHIINNIMKKSKNK</sequence>